<dbReference type="EC" id="2.5.1.54"/>
<dbReference type="EMBL" id="AL513382">
    <property type="protein sequence ID" value="CAD05849.1"/>
    <property type="molecule type" value="Genomic_DNA"/>
</dbReference>
<dbReference type="EMBL" id="AE014613">
    <property type="protein sequence ID" value="AAO70196.1"/>
    <property type="molecule type" value="Genomic_DNA"/>
</dbReference>
<dbReference type="RefSeq" id="NP_457140.1">
    <property type="nucleotide sequence ID" value="NC_003198.1"/>
</dbReference>
<dbReference type="RefSeq" id="WP_001168062.1">
    <property type="nucleotide sequence ID" value="NZ_WSUR01000036.1"/>
</dbReference>
<dbReference type="SMR" id="P0A1B6"/>
<dbReference type="STRING" id="220341.gene:17586753"/>
<dbReference type="KEGG" id="stt:t2625"/>
<dbReference type="KEGG" id="sty:STY2857"/>
<dbReference type="PATRIC" id="fig|220341.7.peg.2906"/>
<dbReference type="eggNOG" id="COG0722">
    <property type="taxonomic scope" value="Bacteria"/>
</dbReference>
<dbReference type="HOGENOM" id="CLU_030903_0_1_6"/>
<dbReference type="OMA" id="QPLVMEN"/>
<dbReference type="OrthoDB" id="9807331at2"/>
<dbReference type="UniPathway" id="UPA00053">
    <property type="reaction ID" value="UER00084"/>
</dbReference>
<dbReference type="Proteomes" id="UP000000541">
    <property type="component" value="Chromosome"/>
</dbReference>
<dbReference type="Proteomes" id="UP000002670">
    <property type="component" value="Chromosome"/>
</dbReference>
<dbReference type="GO" id="GO:0005737">
    <property type="term" value="C:cytoplasm"/>
    <property type="evidence" value="ECO:0007669"/>
    <property type="project" value="TreeGrafter"/>
</dbReference>
<dbReference type="GO" id="GO:0003849">
    <property type="term" value="F:3-deoxy-7-phosphoheptulonate synthase activity"/>
    <property type="evidence" value="ECO:0007669"/>
    <property type="project" value="UniProtKB-EC"/>
</dbReference>
<dbReference type="GO" id="GO:0008652">
    <property type="term" value="P:amino acid biosynthetic process"/>
    <property type="evidence" value="ECO:0007669"/>
    <property type="project" value="UniProtKB-KW"/>
</dbReference>
<dbReference type="GO" id="GO:0009073">
    <property type="term" value="P:aromatic amino acid family biosynthetic process"/>
    <property type="evidence" value="ECO:0007669"/>
    <property type="project" value="UniProtKB-KW"/>
</dbReference>
<dbReference type="GO" id="GO:0009423">
    <property type="term" value="P:chorismate biosynthetic process"/>
    <property type="evidence" value="ECO:0007669"/>
    <property type="project" value="UniProtKB-UniPathway"/>
</dbReference>
<dbReference type="FunFam" id="3.20.20.70:FF:000005">
    <property type="entry name" value="Phospho-2-dehydro-3-deoxyheptonate aldolase"/>
    <property type="match status" value="1"/>
</dbReference>
<dbReference type="Gene3D" id="3.20.20.70">
    <property type="entry name" value="Aldolase class I"/>
    <property type="match status" value="1"/>
</dbReference>
<dbReference type="InterPro" id="IPR013785">
    <property type="entry name" value="Aldolase_TIM"/>
</dbReference>
<dbReference type="InterPro" id="IPR006218">
    <property type="entry name" value="DAHP1/KDSA"/>
</dbReference>
<dbReference type="InterPro" id="IPR006219">
    <property type="entry name" value="DAHP_synth_1"/>
</dbReference>
<dbReference type="NCBIfam" id="TIGR00034">
    <property type="entry name" value="aroFGH"/>
    <property type="match status" value="1"/>
</dbReference>
<dbReference type="NCBIfam" id="NF009395">
    <property type="entry name" value="PRK12755.1"/>
    <property type="match status" value="1"/>
</dbReference>
<dbReference type="PANTHER" id="PTHR21225">
    <property type="entry name" value="PHOSPHO-2-DEHYDRO-3-DEOXYHEPTONATE ALDOLASE DAHP SYNTHETASE"/>
    <property type="match status" value="1"/>
</dbReference>
<dbReference type="PANTHER" id="PTHR21225:SF10">
    <property type="entry name" value="PHOSPHO-2-DEHYDRO-3-DEOXYHEPTONATE ALDOLASE, TYR-SENSITIVE"/>
    <property type="match status" value="1"/>
</dbReference>
<dbReference type="Pfam" id="PF00793">
    <property type="entry name" value="DAHP_synth_1"/>
    <property type="match status" value="1"/>
</dbReference>
<dbReference type="PIRSF" id="PIRSF001361">
    <property type="entry name" value="DAHP_synthase"/>
    <property type="match status" value="1"/>
</dbReference>
<dbReference type="SUPFAM" id="SSF51569">
    <property type="entry name" value="Aldolase"/>
    <property type="match status" value="1"/>
</dbReference>
<organism>
    <name type="scientific">Salmonella typhi</name>
    <dbReference type="NCBI Taxonomy" id="90370"/>
    <lineage>
        <taxon>Bacteria</taxon>
        <taxon>Pseudomonadati</taxon>
        <taxon>Pseudomonadota</taxon>
        <taxon>Gammaproteobacteria</taxon>
        <taxon>Enterobacterales</taxon>
        <taxon>Enterobacteriaceae</taxon>
        <taxon>Salmonella</taxon>
    </lineage>
</organism>
<accession>P0A1B6</accession>
<accession>P21307</accession>
<protein>
    <recommendedName>
        <fullName>Phospho-2-dehydro-3-deoxyheptonate aldolase, Tyr-sensitive</fullName>
        <ecNumber>2.5.1.54</ecNumber>
    </recommendedName>
    <alternativeName>
        <fullName>3-deoxy-D-arabino-heptulosonate 7-phosphate synthase</fullName>
    </alternativeName>
    <alternativeName>
        <fullName>DAHP synthase</fullName>
    </alternativeName>
    <alternativeName>
        <fullName>Phospho-2-keto-3-deoxyheptonate aldolase</fullName>
    </alternativeName>
</protein>
<proteinExistence type="inferred from homology"/>
<gene>
    <name type="primary">aroF</name>
    <name type="ordered locus">STY2857</name>
    <name type="ordered locus">t2625</name>
</gene>
<keyword id="KW-0028">Amino-acid biosynthesis</keyword>
<keyword id="KW-0057">Aromatic amino acid biosynthesis</keyword>
<keyword id="KW-0808">Transferase</keyword>
<feature type="chain" id="PRO_0000140833" description="Phospho-2-dehydro-3-deoxyheptonate aldolase, Tyr-sensitive">
    <location>
        <begin position="1"/>
        <end position="356"/>
    </location>
</feature>
<name>AROF_SALTI</name>
<evidence type="ECO:0000305" key="1"/>
<reference key="1">
    <citation type="journal article" date="2001" name="Nature">
        <title>Complete genome sequence of a multiple drug resistant Salmonella enterica serovar Typhi CT18.</title>
        <authorList>
            <person name="Parkhill J."/>
            <person name="Dougan G."/>
            <person name="James K.D."/>
            <person name="Thomson N.R."/>
            <person name="Pickard D."/>
            <person name="Wain J."/>
            <person name="Churcher C.M."/>
            <person name="Mungall K.L."/>
            <person name="Bentley S.D."/>
            <person name="Holden M.T.G."/>
            <person name="Sebaihia M."/>
            <person name="Baker S."/>
            <person name="Basham D."/>
            <person name="Brooks K."/>
            <person name="Chillingworth T."/>
            <person name="Connerton P."/>
            <person name="Cronin A."/>
            <person name="Davis P."/>
            <person name="Davies R.M."/>
            <person name="Dowd L."/>
            <person name="White N."/>
            <person name="Farrar J."/>
            <person name="Feltwell T."/>
            <person name="Hamlin N."/>
            <person name="Haque A."/>
            <person name="Hien T.T."/>
            <person name="Holroyd S."/>
            <person name="Jagels K."/>
            <person name="Krogh A."/>
            <person name="Larsen T.S."/>
            <person name="Leather S."/>
            <person name="Moule S."/>
            <person name="O'Gaora P."/>
            <person name="Parry C."/>
            <person name="Quail M.A."/>
            <person name="Rutherford K.M."/>
            <person name="Simmonds M."/>
            <person name="Skelton J."/>
            <person name="Stevens K."/>
            <person name="Whitehead S."/>
            <person name="Barrell B.G."/>
        </authorList>
    </citation>
    <scope>NUCLEOTIDE SEQUENCE [LARGE SCALE GENOMIC DNA]</scope>
    <source>
        <strain>CT18</strain>
    </source>
</reference>
<reference key="2">
    <citation type="journal article" date="2003" name="J. Bacteriol.">
        <title>Comparative genomics of Salmonella enterica serovar Typhi strains Ty2 and CT18.</title>
        <authorList>
            <person name="Deng W."/>
            <person name="Liou S.-R."/>
            <person name="Plunkett G. III"/>
            <person name="Mayhew G.F."/>
            <person name="Rose D.J."/>
            <person name="Burland V."/>
            <person name="Kodoyianni V."/>
            <person name="Schwartz D.C."/>
            <person name="Blattner F.R."/>
        </authorList>
    </citation>
    <scope>NUCLEOTIDE SEQUENCE [LARGE SCALE GENOMIC DNA]</scope>
    <source>
        <strain>ATCC 700931 / Ty2</strain>
    </source>
</reference>
<sequence length="356" mass="38713">MQKDALNNVRITDEQVLMTPEQLKAAFPLSLAQEAQIAQSRGIISDIIAGRDPRLLVVCGPCSIHDPETALEYARRFKALAAEVSDSLYLVMRVYFEKPRTTVGWKGLINDPHMDGSFDVEAGLKIARQLLVELVNMGLPLATEALDPNSPQYLGDLFSWSAIGARTTESQTHREMASGLSMPVGFKNGTDGSLATAINAMRAAAQPHRFVGINQAGQVALLQTQGNPHGHVILRGGKAPNYSPADVAQCEKEMEQAGLRPSLMVDCSHGNSNKDYRRQPAVAESVVAQIKDGNRSIIGLMIESNIHEGNQSSEQPRSEMKYGVSVTDACISWEMTDALLREIHKDLSGQLAVRVA</sequence>
<comment type="function">
    <text>Stereospecific condensation of phosphoenolpyruvate (PEP) and D-erythrose-4-phosphate (E4P) giving rise to 3-deoxy-D-arabino-heptulosonate-7-phosphate (DAHP).</text>
</comment>
<comment type="catalytic activity">
    <reaction>
        <text>D-erythrose 4-phosphate + phosphoenolpyruvate + H2O = 7-phospho-2-dehydro-3-deoxy-D-arabino-heptonate + phosphate</text>
        <dbReference type="Rhea" id="RHEA:14717"/>
        <dbReference type="ChEBI" id="CHEBI:15377"/>
        <dbReference type="ChEBI" id="CHEBI:16897"/>
        <dbReference type="ChEBI" id="CHEBI:43474"/>
        <dbReference type="ChEBI" id="CHEBI:58394"/>
        <dbReference type="ChEBI" id="CHEBI:58702"/>
        <dbReference type="EC" id="2.5.1.54"/>
    </reaction>
</comment>
<comment type="pathway">
    <text>Metabolic intermediate biosynthesis; chorismate biosynthesis; chorismate from D-erythrose 4-phosphate and phosphoenolpyruvate: step 1/7.</text>
</comment>
<comment type="miscellaneous">
    <text>There are 3 DAHP synthases, AroF is feedback-inhibited by Tyr. The other 2 DAHP synthases are Phe- and Trp-sensitive, respectively.</text>
</comment>
<comment type="similarity">
    <text evidence="1">Belongs to the class-I DAHP synthase family.</text>
</comment>